<proteinExistence type="inferred from homology"/>
<dbReference type="EMBL" id="CP000513">
    <property type="protein sequence ID" value="ABQ13481.1"/>
    <property type="molecule type" value="Genomic_DNA"/>
</dbReference>
<dbReference type="RefSeq" id="WP_012031608.1">
    <property type="nucleotide sequence ID" value="NC_009446.1"/>
</dbReference>
<dbReference type="SMR" id="A5EX40"/>
<dbReference type="STRING" id="246195.DNO_1324"/>
<dbReference type="KEGG" id="dno:DNO_1324"/>
<dbReference type="eggNOG" id="COG0239">
    <property type="taxonomic scope" value="Bacteria"/>
</dbReference>
<dbReference type="HOGENOM" id="CLU_114342_2_3_6"/>
<dbReference type="OrthoDB" id="9815830at2"/>
<dbReference type="Proteomes" id="UP000000248">
    <property type="component" value="Chromosome"/>
</dbReference>
<dbReference type="GO" id="GO:0005886">
    <property type="term" value="C:plasma membrane"/>
    <property type="evidence" value="ECO:0007669"/>
    <property type="project" value="UniProtKB-SubCell"/>
</dbReference>
<dbReference type="GO" id="GO:0062054">
    <property type="term" value="F:fluoride channel activity"/>
    <property type="evidence" value="ECO:0007669"/>
    <property type="project" value="UniProtKB-UniRule"/>
</dbReference>
<dbReference type="GO" id="GO:0046872">
    <property type="term" value="F:metal ion binding"/>
    <property type="evidence" value="ECO:0007669"/>
    <property type="project" value="UniProtKB-KW"/>
</dbReference>
<dbReference type="GO" id="GO:0140114">
    <property type="term" value="P:cellular detoxification of fluoride"/>
    <property type="evidence" value="ECO:0007669"/>
    <property type="project" value="UniProtKB-UniRule"/>
</dbReference>
<dbReference type="HAMAP" id="MF_00454">
    <property type="entry name" value="FluC"/>
    <property type="match status" value="1"/>
</dbReference>
<dbReference type="InterPro" id="IPR003691">
    <property type="entry name" value="FluC"/>
</dbReference>
<dbReference type="PANTHER" id="PTHR28259">
    <property type="entry name" value="FLUORIDE EXPORT PROTEIN 1-RELATED"/>
    <property type="match status" value="1"/>
</dbReference>
<dbReference type="PANTHER" id="PTHR28259:SF1">
    <property type="entry name" value="FLUORIDE EXPORT PROTEIN 1-RELATED"/>
    <property type="match status" value="1"/>
</dbReference>
<dbReference type="Pfam" id="PF02537">
    <property type="entry name" value="CRCB"/>
    <property type="match status" value="1"/>
</dbReference>
<feature type="chain" id="PRO_1000072378" description="Fluoride-specific ion channel FluC">
    <location>
        <begin position="1"/>
        <end position="122"/>
    </location>
</feature>
<feature type="transmembrane region" description="Helical" evidence="1">
    <location>
        <begin position="1"/>
        <end position="21"/>
    </location>
</feature>
<feature type="transmembrane region" description="Helical" evidence="1">
    <location>
        <begin position="35"/>
        <end position="55"/>
    </location>
</feature>
<feature type="transmembrane region" description="Helical" evidence="1">
    <location>
        <begin position="67"/>
        <end position="87"/>
    </location>
</feature>
<feature type="transmembrane region" description="Helical" evidence="1">
    <location>
        <begin position="98"/>
        <end position="118"/>
    </location>
</feature>
<feature type="binding site" evidence="1">
    <location>
        <position position="74"/>
    </location>
    <ligand>
        <name>Na(+)</name>
        <dbReference type="ChEBI" id="CHEBI:29101"/>
        <note>structural</note>
    </ligand>
</feature>
<feature type="binding site" evidence="1">
    <location>
        <position position="77"/>
    </location>
    <ligand>
        <name>Na(+)</name>
        <dbReference type="ChEBI" id="CHEBI:29101"/>
        <note>structural</note>
    </ligand>
</feature>
<accession>A5EX40</accession>
<comment type="function">
    <text evidence="1">Fluoride-specific ion channel. Important for reducing fluoride concentration in the cell, thus reducing its toxicity.</text>
</comment>
<comment type="catalytic activity">
    <reaction evidence="1">
        <text>fluoride(in) = fluoride(out)</text>
        <dbReference type="Rhea" id="RHEA:76159"/>
        <dbReference type="ChEBI" id="CHEBI:17051"/>
    </reaction>
    <physiologicalReaction direction="left-to-right" evidence="1">
        <dbReference type="Rhea" id="RHEA:76160"/>
    </physiologicalReaction>
</comment>
<comment type="activity regulation">
    <text evidence="1">Na(+) is not transported, but it plays an essential structural role and its presence is essential for fluoride channel function.</text>
</comment>
<comment type="subcellular location">
    <subcellularLocation>
        <location evidence="1">Cell inner membrane</location>
        <topology evidence="1">Multi-pass membrane protein</topology>
    </subcellularLocation>
</comment>
<comment type="similarity">
    <text evidence="1">Belongs to the fluoride channel Fluc/FEX (TC 1.A.43) family.</text>
</comment>
<evidence type="ECO:0000255" key="1">
    <source>
        <dbReference type="HAMAP-Rule" id="MF_00454"/>
    </source>
</evidence>
<name>FLUC_DICNV</name>
<gene>
    <name evidence="1" type="primary">fluC</name>
    <name evidence="1" type="synonym">crcB</name>
    <name type="ordered locus">DNO_1324</name>
</gene>
<reference key="1">
    <citation type="journal article" date="2007" name="Nat. Biotechnol.">
        <title>Genome sequence and identification of candidate vaccine antigens from the animal pathogen Dichelobacter nodosus.</title>
        <authorList>
            <person name="Myers G.S.A."/>
            <person name="Parker D."/>
            <person name="Al-Hasani K."/>
            <person name="Kennan R.M."/>
            <person name="Seemann T."/>
            <person name="Ren Q."/>
            <person name="Badger J.H."/>
            <person name="Selengut J.D."/>
            <person name="Deboy R.T."/>
            <person name="Tettelin H."/>
            <person name="Boyce J.D."/>
            <person name="McCarl V.P."/>
            <person name="Han X."/>
            <person name="Nelson W.C."/>
            <person name="Madupu R."/>
            <person name="Mohamoud Y."/>
            <person name="Holley T."/>
            <person name="Fedorova N."/>
            <person name="Khouri H."/>
            <person name="Bottomley S.P."/>
            <person name="Whittington R.J."/>
            <person name="Adler B."/>
            <person name="Songer J.G."/>
            <person name="Rood J.I."/>
            <person name="Paulsen I.T."/>
        </authorList>
    </citation>
    <scope>NUCLEOTIDE SEQUENCE [LARGE SCALE GENOMIC DNA]</scope>
    <source>
        <strain>VCS1703A</strain>
    </source>
</reference>
<keyword id="KW-0997">Cell inner membrane</keyword>
<keyword id="KW-1003">Cell membrane</keyword>
<keyword id="KW-0407">Ion channel</keyword>
<keyword id="KW-0406">Ion transport</keyword>
<keyword id="KW-0472">Membrane</keyword>
<keyword id="KW-0479">Metal-binding</keyword>
<keyword id="KW-1185">Reference proteome</keyword>
<keyword id="KW-0915">Sodium</keyword>
<keyword id="KW-0812">Transmembrane</keyword>
<keyword id="KW-1133">Transmembrane helix</keyword>
<keyword id="KW-0813">Transport</keyword>
<protein>
    <recommendedName>
        <fullName evidence="1">Fluoride-specific ion channel FluC</fullName>
    </recommendedName>
</protein>
<organism>
    <name type="scientific">Dichelobacter nodosus (strain VCS1703A)</name>
    <dbReference type="NCBI Taxonomy" id="246195"/>
    <lineage>
        <taxon>Bacteria</taxon>
        <taxon>Pseudomonadati</taxon>
        <taxon>Pseudomonadota</taxon>
        <taxon>Gammaproteobacteria</taxon>
        <taxon>Cardiobacteriales</taxon>
        <taxon>Cardiobacteriaceae</taxon>
        <taxon>Dichelobacter</taxon>
    </lineage>
</organism>
<sequence length="122" mass="13535">MYAFFTIFIGGGLGAVSRHYLSVYLMRMTAINAPWAILLINLLGCLGIGFFSAYLSRLTHAQLWQWFLLTGFLGGFTTYSTFTLNLIQLGEIHLASAFLNLFLHLGGGILCCFVGFWLARAV</sequence>